<feature type="chain" id="PRO_0000292785" description="Pyrimidine/purine nucleoside phosphorylase">
    <location>
        <begin position="1"/>
        <end position="106"/>
    </location>
</feature>
<accession>Q397E7</accession>
<evidence type="ECO:0000255" key="1">
    <source>
        <dbReference type="HAMAP-Rule" id="MF_01537"/>
    </source>
</evidence>
<comment type="function">
    <text evidence="1">Catalyzes the phosphorolysis of diverse nucleosides, yielding D-ribose 1-phosphate and the respective free bases. Can use uridine, adenosine, guanosine, cytidine, thymidine, inosine and xanthosine as substrates. Also catalyzes the reverse reactions.</text>
</comment>
<comment type="catalytic activity">
    <reaction evidence="1">
        <text>a purine D-ribonucleoside + phosphate = a purine nucleobase + alpha-D-ribose 1-phosphate</text>
        <dbReference type="Rhea" id="RHEA:19805"/>
        <dbReference type="ChEBI" id="CHEBI:26386"/>
        <dbReference type="ChEBI" id="CHEBI:43474"/>
        <dbReference type="ChEBI" id="CHEBI:57720"/>
        <dbReference type="ChEBI" id="CHEBI:142355"/>
        <dbReference type="EC" id="2.4.2.1"/>
    </reaction>
</comment>
<comment type="catalytic activity">
    <reaction evidence="1">
        <text>adenosine + phosphate = alpha-D-ribose 1-phosphate + adenine</text>
        <dbReference type="Rhea" id="RHEA:27642"/>
        <dbReference type="ChEBI" id="CHEBI:16335"/>
        <dbReference type="ChEBI" id="CHEBI:16708"/>
        <dbReference type="ChEBI" id="CHEBI:43474"/>
        <dbReference type="ChEBI" id="CHEBI:57720"/>
        <dbReference type="EC" id="2.4.2.1"/>
    </reaction>
</comment>
<comment type="catalytic activity">
    <reaction evidence="1">
        <text>cytidine + phosphate = cytosine + alpha-D-ribose 1-phosphate</text>
        <dbReference type="Rhea" id="RHEA:52540"/>
        <dbReference type="ChEBI" id="CHEBI:16040"/>
        <dbReference type="ChEBI" id="CHEBI:17562"/>
        <dbReference type="ChEBI" id="CHEBI:43474"/>
        <dbReference type="ChEBI" id="CHEBI:57720"/>
        <dbReference type="EC" id="2.4.2.2"/>
    </reaction>
</comment>
<comment type="catalytic activity">
    <reaction evidence="1">
        <text>guanosine + phosphate = alpha-D-ribose 1-phosphate + guanine</text>
        <dbReference type="Rhea" id="RHEA:13233"/>
        <dbReference type="ChEBI" id="CHEBI:16235"/>
        <dbReference type="ChEBI" id="CHEBI:16750"/>
        <dbReference type="ChEBI" id="CHEBI:43474"/>
        <dbReference type="ChEBI" id="CHEBI:57720"/>
        <dbReference type="EC" id="2.4.2.1"/>
    </reaction>
</comment>
<comment type="catalytic activity">
    <reaction evidence="1">
        <text>inosine + phosphate = alpha-D-ribose 1-phosphate + hypoxanthine</text>
        <dbReference type="Rhea" id="RHEA:27646"/>
        <dbReference type="ChEBI" id="CHEBI:17368"/>
        <dbReference type="ChEBI" id="CHEBI:17596"/>
        <dbReference type="ChEBI" id="CHEBI:43474"/>
        <dbReference type="ChEBI" id="CHEBI:57720"/>
        <dbReference type="EC" id="2.4.2.1"/>
    </reaction>
</comment>
<comment type="catalytic activity">
    <reaction evidence="1">
        <text>thymidine + phosphate = 2-deoxy-alpha-D-ribose 1-phosphate + thymine</text>
        <dbReference type="Rhea" id="RHEA:16037"/>
        <dbReference type="ChEBI" id="CHEBI:17748"/>
        <dbReference type="ChEBI" id="CHEBI:17821"/>
        <dbReference type="ChEBI" id="CHEBI:43474"/>
        <dbReference type="ChEBI" id="CHEBI:57259"/>
        <dbReference type="EC" id="2.4.2.2"/>
    </reaction>
</comment>
<comment type="catalytic activity">
    <reaction evidence="1">
        <text>uridine + phosphate = alpha-D-ribose 1-phosphate + uracil</text>
        <dbReference type="Rhea" id="RHEA:24388"/>
        <dbReference type="ChEBI" id="CHEBI:16704"/>
        <dbReference type="ChEBI" id="CHEBI:17568"/>
        <dbReference type="ChEBI" id="CHEBI:43474"/>
        <dbReference type="ChEBI" id="CHEBI:57720"/>
        <dbReference type="EC" id="2.4.2.2"/>
    </reaction>
</comment>
<comment type="catalytic activity">
    <reaction evidence="1">
        <text>xanthosine + phosphate = alpha-D-ribose 1-phosphate + xanthine</text>
        <dbReference type="Rhea" id="RHEA:27638"/>
        <dbReference type="ChEBI" id="CHEBI:17712"/>
        <dbReference type="ChEBI" id="CHEBI:18107"/>
        <dbReference type="ChEBI" id="CHEBI:43474"/>
        <dbReference type="ChEBI" id="CHEBI:57720"/>
        <dbReference type="EC" id="2.4.2.1"/>
    </reaction>
</comment>
<comment type="similarity">
    <text evidence="1">Belongs to the nucleoside phosphorylase PpnP family.</text>
</comment>
<gene>
    <name evidence="1" type="primary">ppnP</name>
    <name type="ordered locus">Bcep18194_B1300</name>
</gene>
<protein>
    <recommendedName>
        <fullName evidence="1">Pyrimidine/purine nucleoside phosphorylase</fullName>
        <ecNumber evidence="1">2.4.2.1</ecNumber>
        <ecNumber evidence="1">2.4.2.2</ecNumber>
    </recommendedName>
    <alternativeName>
        <fullName evidence="1">Adenosine phosphorylase</fullName>
    </alternativeName>
    <alternativeName>
        <fullName evidence="1">Cytidine phosphorylase</fullName>
    </alternativeName>
    <alternativeName>
        <fullName evidence="1">Guanosine phosphorylase</fullName>
    </alternativeName>
    <alternativeName>
        <fullName evidence="1">Inosine phosphorylase</fullName>
    </alternativeName>
    <alternativeName>
        <fullName evidence="1">Thymidine phosphorylase</fullName>
    </alternativeName>
    <alternativeName>
        <fullName evidence="1">Uridine phosphorylase</fullName>
    </alternativeName>
    <alternativeName>
        <fullName evidence="1">Xanthosine phosphorylase</fullName>
    </alternativeName>
</protein>
<organism>
    <name type="scientific">Burkholderia lata (strain ATCC 17760 / DSM 23089 / LMG 22485 / NCIMB 9086 / R18194 / 383)</name>
    <dbReference type="NCBI Taxonomy" id="482957"/>
    <lineage>
        <taxon>Bacteria</taxon>
        <taxon>Pseudomonadati</taxon>
        <taxon>Pseudomonadota</taxon>
        <taxon>Betaproteobacteria</taxon>
        <taxon>Burkholderiales</taxon>
        <taxon>Burkholderiaceae</taxon>
        <taxon>Burkholderia</taxon>
        <taxon>Burkholderia cepacia complex</taxon>
    </lineage>
</organism>
<proteinExistence type="inferred from homology"/>
<sequence length="106" mass="11608">MTSATQFDNVSVVKRANVYFDGKCVSHTVLFPDGTRKTLGVILPCALNFGTDAPELMEVQAGKCRVKLDGSSEWQTYGAGESFSVPGKSRFDIEVLETLDYVCSYL</sequence>
<reference key="1">
    <citation type="submission" date="2005-10" db="EMBL/GenBank/DDBJ databases">
        <title>Complete sequence of chromosome 2 of Burkholderia sp. 383.</title>
        <authorList>
            <consortium name="US DOE Joint Genome Institute"/>
            <person name="Copeland A."/>
            <person name="Lucas S."/>
            <person name="Lapidus A."/>
            <person name="Barry K."/>
            <person name="Detter J.C."/>
            <person name="Glavina T."/>
            <person name="Hammon N."/>
            <person name="Israni S."/>
            <person name="Pitluck S."/>
            <person name="Chain P."/>
            <person name="Malfatti S."/>
            <person name="Shin M."/>
            <person name="Vergez L."/>
            <person name="Schmutz J."/>
            <person name="Larimer F."/>
            <person name="Land M."/>
            <person name="Kyrpides N."/>
            <person name="Lykidis A."/>
            <person name="Richardson P."/>
        </authorList>
    </citation>
    <scope>NUCLEOTIDE SEQUENCE [LARGE SCALE GENOMIC DNA]</scope>
    <source>
        <strain>ATCC 17760 / DSM 23089 / LMG 22485 / NCIMB 9086 / R18194 / 383</strain>
    </source>
</reference>
<dbReference type="EC" id="2.4.2.1" evidence="1"/>
<dbReference type="EC" id="2.4.2.2" evidence="1"/>
<dbReference type="EMBL" id="CP000152">
    <property type="protein sequence ID" value="ABB11414.1"/>
    <property type="molecule type" value="Genomic_DNA"/>
</dbReference>
<dbReference type="RefSeq" id="WP_006478890.1">
    <property type="nucleotide sequence ID" value="NZ_WNDV01000001.1"/>
</dbReference>
<dbReference type="SMR" id="Q397E7"/>
<dbReference type="KEGG" id="bur:Bcep18194_B1300"/>
<dbReference type="HOGENOM" id="CLU_157874_1_0_4"/>
<dbReference type="Proteomes" id="UP000002705">
    <property type="component" value="Chromosome 2"/>
</dbReference>
<dbReference type="GO" id="GO:0005829">
    <property type="term" value="C:cytosol"/>
    <property type="evidence" value="ECO:0007669"/>
    <property type="project" value="TreeGrafter"/>
</dbReference>
<dbReference type="GO" id="GO:0047975">
    <property type="term" value="F:guanosine phosphorylase activity"/>
    <property type="evidence" value="ECO:0007669"/>
    <property type="project" value="UniProtKB-EC"/>
</dbReference>
<dbReference type="GO" id="GO:0004731">
    <property type="term" value="F:purine-nucleoside phosphorylase activity"/>
    <property type="evidence" value="ECO:0007669"/>
    <property type="project" value="UniProtKB-UniRule"/>
</dbReference>
<dbReference type="GO" id="GO:0009032">
    <property type="term" value="F:thymidine phosphorylase activity"/>
    <property type="evidence" value="ECO:0007669"/>
    <property type="project" value="UniProtKB-EC"/>
</dbReference>
<dbReference type="GO" id="GO:0004850">
    <property type="term" value="F:uridine phosphorylase activity"/>
    <property type="evidence" value="ECO:0007669"/>
    <property type="project" value="UniProtKB-EC"/>
</dbReference>
<dbReference type="CDD" id="cd20296">
    <property type="entry name" value="cupin_PpnP-like"/>
    <property type="match status" value="1"/>
</dbReference>
<dbReference type="Gene3D" id="2.60.120.10">
    <property type="entry name" value="Jelly Rolls"/>
    <property type="match status" value="1"/>
</dbReference>
<dbReference type="HAMAP" id="MF_01537">
    <property type="entry name" value="Nucleos_phosphorylase_PpnP"/>
    <property type="match status" value="1"/>
</dbReference>
<dbReference type="InterPro" id="IPR009664">
    <property type="entry name" value="Ppnp"/>
</dbReference>
<dbReference type="InterPro" id="IPR014710">
    <property type="entry name" value="RmlC-like_jellyroll"/>
</dbReference>
<dbReference type="InterPro" id="IPR011051">
    <property type="entry name" value="RmlC_Cupin_sf"/>
</dbReference>
<dbReference type="PANTHER" id="PTHR36540">
    <property type="entry name" value="PYRIMIDINE/PURINE NUCLEOSIDE PHOSPHORYLASE"/>
    <property type="match status" value="1"/>
</dbReference>
<dbReference type="PANTHER" id="PTHR36540:SF1">
    <property type="entry name" value="PYRIMIDINE_PURINE NUCLEOSIDE PHOSPHORYLASE"/>
    <property type="match status" value="1"/>
</dbReference>
<dbReference type="Pfam" id="PF06865">
    <property type="entry name" value="Ppnp"/>
    <property type="match status" value="1"/>
</dbReference>
<dbReference type="SUPFAM" id="SSF51182">
    <property type="entry name" value="RmlC-like cupins"/>
    <property type="match status" value="1"/>
</dbReference>
<keyword id="KW-0328">Glycosyltransferase</keyword>
<keyword id="KW-0808">Transferase</keyword>
<name>PPNP_BURL3</name>